<organism>
    <name type="scientific">Saccharomyces cerevisiae (strain ATCC 204508 / S288c)</name>
    <name type="common">Baker's yeast</name>
    <dbReference type="NCBI Taxonomy" id="559292"/>
    <lineage>
        <taxon>Eukaryota</taxon>
        <taxon>Fungi</taxon>
        <taxon>Dikarya</taxon>
        <taxon>Ascomycota</taxon>
        <taxon>Saccharomycotina</taxon>
        <taxon>Saccharomycetes</taxon>
        <taxon>Saccharomycetales</taxon>
        <taxon>Saccharomycetaceae</taxon>
        <taxon>Saccharomyces</taxon>
    </lineage>
</organism>
<feature type="chain" id="PRO_0000262756" description="Protein WHI4">
    <location>
        <begin position="1"/>
        <end position="649"/>
    </location>
</feature>
<feature type="domain" description="RRM" evidence="1">
    <location>
        <begin position="533"/>
        <end position="625"/>
    </location>
</feature>
<feature type="region of interest" description="Disordered" evidence="2">
    <location>
        <begin position="196"/>
        <end position="217"/>
    </location>
</feature>
<feature type="region of interest" description="Disordered" evidence="2">
    <location>
        <begin position="228"/>
        <end position="247"/>
    </location>
</feature>
<feature type="region of interest" description="Disordered" evidence="2">
    <location>
        <begin position="438"/>
        <end position="461"/>
    </location>
</feature>
<feature type="region of interest" description="Disordered" evidence="2">
    <location>
        <begin position="604"/>
        <end position="649"/>
    </location>
</feature>
<feature type="compositionally biased region" description="Polar residues" evidence="2">
    <location>
        <begin position="228"/>
        <end position="238"/>
    </location>
</feature>
<feature type="compositionally biased region" description="Polar residues" evidence="2">
    <location>
        <begin position="631"/>
        <end position="649"/>
    </location>
</feature>
<feature type="modified residue" description="Phosphoserine" evidence="7">
    <location>
        <position position="22"/>
    </location>
</feature>
<feature type="modified residue" description="Phosphoserine" evidence="7">
    <location>
        <position position="206"/>
    </location>
</feature>
<feature type="modified residue" description="Phosphoserine" evidence="7">
    <location>
        <position position="258"/>
    </location>
</feature>
<feature type="modified residue" description="Phosphoserine" evidence="7">
    <location>
        <position position="283"/>
    </location>
</feature>
<comment type="function">
    <text evidence="3">Has a partially redundant function to WHI3, a dosage-dependent modulator of cell size.</text>
</comment>
<comment type="interaction">
    <interactant intactId="EBI-31312">
        <id>Q07655</id>
    </interactant>
    <interactant intactId="EBI-20537">
        <id>P34761</id>
        <label>WHI3</label>
    </interactant>
    <organismsDiffer>false</organismsDiffer>
    <experiments>3</experiments>
</comment>
<comment type="subcellular location">
    <subcellularLocation>
        <location evidence="4">Cytoplasm</location>
    </subcellularLocation>
</comment>
<comment type="induction">
    <text evidence="6">Cell cycle-regulated. Expression peaks during S/G2 phase.</text>
</comment>
<comment type="PTM">
    <text evidence="5">Phosphorylated by PKA in vitro.</text>
</comment>
<evidence type="ECO:0000255" key="1">
    <source>
        <dbReference type="PROSITE-ProRule" id="PRU00176"/>
    </source>
</evidence>
<evidence type="ECO:0000256" key="2">
    <source>
        <dbReference type="SAM" id="MobiDB-lite"/>
    </source>
</evidence>
<evidence type="ECO:0000269" key="3">
    <source>
    </source>
</evidence>
<evidence type="ECO:0000269" key="4">
    <source>
    </source>
</evidence>
<evidence type="ECO:0000269" key="5">
    <source>
    </source>
</evidence>
<evidence type="ECO:0000269" key="6">
    <source>
    </source>
</evidence>
<evidence type="ECO:0007744" key="7">
    <source>
    </source>
</evidence>
<accession>Q07655</accession>
<accession>D6VRD1</accession>
<name>WHI4_YEAST</name>
<gene>
    <name type="primary">WHI4</name>
    <name type="ordered locus">YDL224C</name>
    <name type="ORF">D0839</name>
</gene>
<proteinExistence type="evidence at protein level"/>
<protein>
    <recommendedName>
        <fullName>Protein WHI4</fullName>
    </recommendedName>
</protein>
<keyword id="KW-0963">Cytoplasm</keyword>
<keyword id="KW-0597">Phosphoprotein</keyword>
<keyword id="KW-1185">Reference proteome</keyword>
<keyword id="KW-0694">RNA-binding</keyword>
<sequence>MSLVHNQTNLNESKFLIERAFSSSSETVPLSKEATYPMPTAYSFSAVRSNSETNIKRENPQGFAKEPIMTSMLHNLTMSTGKGNGNDVNSLAPHDVDVGPYCLLLRNLPKDITLRECYCIFSLATGVSSIELKRDDREPFNDNEKVVVVKFGSLSLVTHYANILNSKSEIFGPSFPFRSHIDVVNEQTQLPVSFQEHVSSGTTNSSPKNYQLSSSAQNEIQNQSFNTISYGKTSSSPLGPSAAKPRPSLLSERSLRFSFNDPFGLETISQRKESVPFLRNSISQHDLSNVTTTPVPAGMPPQKDAGKSLLLLEKDEINESIWNGDELVNDVGNSSFGASLQEPPMSSTPVMEWNASSTANIPLFQLSSQENHQSNLLPPSHHSISQDVPHIQSQPNLNNSGVIHSATSLPHYHLLNQINASTKTQSIQQSVSNVPSNLDLNLQTENGHPQSSAPNGSSIFNNQKVNQGFLVSEQDTSTISRQKECSSTASASAFSKNNETNVAGSTTISQADLSLLAKVPPPANPADQNPPCNTLYVGNLPPDATEQELRQLFSNQQGFRRLSFRNKMNSHGHGNGHGHGPICFVEFEDVSFATRALAELYGSQLPHPRPSLNNKGGIRLSFSKNPLGVRGSNSRSKSGYSFNGSYGKS</sequence>
<reference key="1">
    <citation type="journal article" date="1997" name="Nature">
        <title>The nucleotide sequence of Saccharomyces cerevisiae chromosome IV.</title>
        <authorList>
            <person name="Jacq C."/>
            <person name="Alt-Moerbe J."/>
            <person name="Andre B."/>
            <person name="Arnold W."/>
            <person name="Bahr A."/>
            <person name="Ballesta J.P.G."/>
            <person name="Bargues M."/>
            <person name="Baron L."/>
            <person name="Becker A."/>
            <person name="Biteau N."/>
            <person name="Bloecker H."/>
            <person name="Blugeon C."/>
            <person name="Boskovic J."/>
            <person name="Brandt P."/>
            <person name="Brueckner M."/>
            <person name="Buitrago M.J."/>
            <person name="Coster F."/>
            <person name="Delaveau T."/>
            <person name="del Rey F."/>
            <person name="Dujon B."/>
            <person name="Eide L.G."/>
            <person name="Garcia-Cantalejo J.M."/>
            <person name="Goffeau A."/>
            <person name="Gomez-Peris A."/>
            <person name="Granotier C."/>
            <person name="Hanemann V."/>
            <person name="Hankeln T."/>
            <person name="Hoheisel J.D."/>
            <person name="Jaeger W."/>
            <person name="Jimenez A."/>
            <person name="Jonniaux J.-L."/>
            <person name="Kraemer C."/>
            <person name="Kuester H."/>
            <person name="Laamanen P."/>
            <person name="Legros Y."/>
            <person name="Louis E.J."/>
            <person name="Moeller-Rieker S."/>
            <person name="Monnet A."/>
            <person name="Moro M."/>
            <person name="Mueller-Auer S."/>
            <person name="Nussbaumer B."/>
            <person name="Paricio N."/>
            <person name="Paulin L."/>
            <person name="Perea J."/>
            <person name="Perez-Alonso M."/>
            <person name="Perez-Ortin J.E."/>
            <person name="Pohl T.M."/>
            <person name="Prydz H."/>
            <person name="Purnelle B."/>
            <person name="Rasmussen S.W."/>
            <person name="Remacha M.A."/>
            <person name="Revuelta J.L."/>
            <person name="Rieger M."/>
            <person name="Salom D."/>
            <person name="Saluz H.P."/>
            <person name="Saiz J.E."/>
            <person name="Saren A.-M."/>
            <person name="Schaefer M."/>
            <person name="Scharfe M."/>
            <person name="Schmidt E.R."/>
            <person name="Schneider C."/>
            <person name="Scholler P."/>
            <person name="Schwarz S."/>
            <person name="Soler-Mira A."/>
            <person name="Urrestarazu L.A."/>
            <person name="Verhasselt P."/>
            <person name="Vissers S."/>
            <person name="Voet M."/>
            <person name="Volckaert G."/>
            <person name="Wagner G."/>
            <person name="Wambutt R."/>
            <person name="Wedler E."/>
            <person name="Wedler H."/>
            <person name="Woelfl S."/>
            <person name="Harris D.E."/>
            <person name="Bowman S."/>
            <person name="Brown D."/>
            <person name="Churcher C.M."/>
            <person name="Connor R."/>
            <person name="Dedman K."/>
            <person name="Gentles S."/>
            <person name="Hamlin N."/>
            <person name="Hunt S."/>
            <person name="Jones L."/>
            <person name="McDonald S."/>
            <person name="Murphy L.D."/>
            <person name="Niblett D."/>
            <person name="Odell C."/>
            <person name="Oliver K."/>
            <person name="Rajandream M.A."/>
            <person name="Richards C."/>
            <person name="Shore L."/>
            <person name="Walsh S.V."/>
            <person name="Barrell B.G."/>
            <person name="Dietrich F.S."/>
            <person name="Mulligan J.T."/>
            <person name="Allen E."/>
            <person name="Araujo R."/>
            <person name="Aviles E."/>
            <person name="Berno A."/>
            <person name="Carpenter J."/>
            <person name="Chen E."/>
            <person name="Cherry J.M."/>
            <person name="Chung E."/>
            <person name="Duncan M."/>
            <person name="Hunicke-Smith S."/>
            <person name="Hyman R.W."/>
            <person name="Komp C."/>
            <person name="Lashkari D."/>
            <person name="Lew H."/>
            <person name="Lin D."/>
            <person name="Mosedale D."/>
            <person name="Nakahara K."/>
            <person name="Namath A."/>
            <person name="Oefner P."/>
            <person name="Oh C."/>
            <person name="Petel F.X."/>
            <person name="Roberts D."/>
            <person name="Schramm S."/>
            <person name="Schroeder M."/>
            <person name="Shogren T."/>
            <person name="Shroff N."/>
            <person name="Winant A."/>
            <person name="Yelton M.A."/>
            <person name="Botstein D."/>
            <person name="Davis R.W."/>
            <person name="Johnston M."/>
            <person name="Andrews S."/>
            <person name="Brinkman R."/>
            <person name="Cooper J."/>
            <person name="Ding H."/>
            <person name="Du Z."/>
            <person name="Favello A."/>
            <person name="Fulton L."/>
            <person name="Gattung S."/>
            <person name="Greco T."/>
            <person name="Hallsworth K."/>
            <person name="Hawkins J."/>
            <person name="Hillier L.W."/>
            <person name="Jier M."/>
            <person name="Johnson D."/>
            <person name="Johnston L."/>
            <person name="Kirsten J."/>
            <person name="Kucaba T."/>
            <person name="Langston Y."/>
            <person name="Latreille P."/>
            <person name="Le T."/>
            <person name="Mardis E."/>
            <person name="Menezes S."/>
            <person name="Miller N."/>
            <person name="Nhan M."/>
            <person name="Pauley A."/>
            <person name="Peluso D."/>
            <person name="Rifkin L."/>
            <person name="Riles L."/>
            <person name="Taich A."/>
            <person name="Trevaskis E."/>
            <person name="Vignati D."/>
            <person name="Wilcox L."/>
            <person name="Wohldman P."/>
            <person name="Vaudin M."/>
            <person name="Wilson R."/>
            <person name="Waterston R."/>
            <person name="Albermann K."/>
            <person name="Hani J."/>
            <person name="Heumann K."/>
            <person name="Kleine K."/>
            <person name="Mewes H.-W."/>
            <person name="Zollner A."/>
            <person name="Zaccaria P."/>
        </authorList>
    </citation>
    <scope>NUCLEOTIDE SEQUENCE [LARGE SCALE GENOMIC DNA]</scope>
    <source>
        <strain>ATCC 204508 / S288c</strain>
    </source>
</reference>
<reference key="2">
    <citation type="journal article" date="2014" name="G3 (Bethesda)">
        <title>The reference genome sequence of Saccharomyces cerevisiae: Then and now.</title>
        <authorList>
            <person name="Engel S.R."/>
            <person name="Dietrich F.S."/>
            <person name="Fisk D.G."/>
            <person name="Binkley G."/>
            <person name="Balakrishnan R."/>
            <person name="Costanzo M.C."/>
            <person name="Dwight S.S."/>
            <person name="Hitz B.C."/>
            <person name="Karra K."/>
            <person name="Nash R.S."/>
            <person name="Weng S."/>
            <person name="Wong E.D."/>
            <person name="Lloyd P."/>
            <person name="Skrzypek M.S."/>
            <person name="Miyasato S.R."/>
            <person name="Simison M."/>
            <person name="Cherry J.M."/>
        </authorList>
    </citation>
    <scope>GENOME REANNOTATION</scope>
    <source>
        <strain>ATCC 204508 / S288c</strain>
    </source>
</reference>
<reference key="3">
    <citation type="journal article" date="2001" name="Genetics">
        <title>Isolation and characterization of WHI3, a size-control gene of Saccharomyces cerevisiae.</title>
        <authorList>
            <person name="Nash R.S."/>
            <person name="Volpe T."/>
            <person name="Futcher B."/>
        </authorList>
    </citation>
    <scope>FUNCTION</scope>
</reference>
<reference key="4">
    <citation type="journal article" date="2003" name="Nature">
        <title>Global analysis of protein localization in budding yeast.</title>
        <authorList>
            <person name="Huh W.-K."/>
            <person name="Falvo J.V."/>
            <person name="Gerke L.C."/>
            <person name="Carroll A.S."/>
            <person name="Howson R.W."/>
            <person name="Weissman J.S."/>
            <person name="O'Shea E.K."/>
        </authorList>
    </citation>
    <scope>SUBCELLULAR LOCATION [LARGE SCALE ANALYSIS]</scope>
</reference>
<reference key="5">
    <citation type="journal article" date="2005" name="Proc. Natl. Acad. Sci. U.S.A.">
        <title>An evolutionary proteomics approach identifies substrates of the cAMP-dependent protein kinase.</title>
        <authorList>
            <person name="Budovskaya Y.V."/>
            <person name="Stephan J.S."/>
            <person name="Deminoff S.J."/>
            <person name="Herman P.K."/>
        </authorList>
    </citation>
    <scope>PHOSPHORYLATION</scope>
</reference>
<reference key="6">
    <citation type="journal article" date="2005" name="Yeast">
        <title>New weakly expressed cell cycle-regulated genes in yeast.</title>
        <authorList>
            <person name="de Lichtenberg U."/>
            <person name="Wernersson R."/>
            <person name="Jensen T.S."/>
            <person name="Nielsen H.B."/>
            <person name="Fausboell A."/>
            <person name="Schmidt P."/>
            <person name="Hansen F.B."/>
            <person name="Knudsen S."/>
            <person name="Brunak S."/>
        </authorList>
    </citation>
    <scope>INDUCTION</scope>
</reference>
<reference key="7">
    <citation type="journal article" date="2008" name="Mol. Cell. Proteomics">
        <title>A multidimensional chromatography technology for in-depth phosphoproteome analysis.</title>
        <authorList>
            <person name="Albuquerque C.P."/>
            <person name="Smolka M.B."/>
            <person name="Payne S.H."/>
            <person name="Bafna V."/>
            <person name="Eng J."/>
            <person name="Zhou H."/>
        </authorList>
    </citation>
    <scope>IDENTIFICATION BY MASS SPECTROMETRY [LARGE SCALE ANALYSIS]</scope>
</reference>
<reference key="8">
    <citation type="journal article" date="2009" name="Science">
        <title>Global analysis of Cdk1 substrate phosphorylation sites provides insights into evolution.</title>
        <authorList>
            <person name="Holt L.J."/>
            <person name="Tuch B.B."/>
            <person name="Villen J."/>
            <person name="Johnson A.D."/>
            <person name="Gygi S.P."/>
            <person name="Morgan D.O."/>
        </authorList>
    </citation>
    <scope>PHOSPHORYLATION [LARGE SCALE ANALYSIS] AT SER-22; SER-206; SER-258 AND SER-283</scope>
    <scope>IDENTIFICATION BY MASS SPECTROMETRY [LARGE SCALE ANALYSIS]</scope>
</reference>
<dbReference type="EMBL" id="Z74272">
    <property type="protein sequence ID" value="CAA98803.1"/>
    <property type="molecule type" value="Genomic_DNA"/>
</dbReference>
<dbReference type="EMBL" id="BK006938">
    <property type="protein sequence ID" value="DAA11641.1"/>
    <property type="molecule type" value="Genomic_DNA"/>
</dbReference>
<dbReference type="PIR" id="S67787">
    <property type="entry name" value="S67787"/>
</dbReference>
<dbReference type="RefSeq" id="NP_010057.1">
    <property type="nucleotide sequence ID" value="NM_001180284.1"/>
</dbReference>
<dbReference type="SMR" id="Q07655"/>
<dbReference type="BioGRID" id="31822">
    <property type="interactions" value="100"/>
</dbReference>
<dbReference type="DIP" id="DIP-4321N"/>
<dbReference type="FunCoup" id="Q07655">
    <property type="interactions" value="171"/>
</dbReference>
<dbReference type="IntAct" id="Q07655">
    <property type="interactions" value="10"/>
</dbReference>
<dbReference type="MINT" id="Q07655"/>
<dbReference type="STRING" id="4932.YDL224C"/>
<dbReference type="GlyGen" id="Q07655">
    <property type="glycosylation" value="2 sites, 1 O-linked glycan (2 sites)"/>
</dbReference>
<dbReference type="iPTMnet" id="Q07655"/>
<dbReference type="PaxDb" id="4932-YDL224C"/>
<dbReference type="PeptideAtlas" id="Q07655"/>
<dbReference type="EnsemblFungi" id="YDL224C_mRNA">
    <property type="protein sequence ID" value="YDL224C"/>
    <property type="gene ID" value="YDL224C"/>
</dbReference>
<dbReference type="GeneID" id="851302"/>
<dbReference type="KEGG" id="sce:YDL224C"/>
<dbReference type="AGR" id="SGD:S000002383"/>
<dbReference type="SGD" id="S000002383">
    <property type="gene designation" value="WHI4"/>
</dbReference>
<dbReference type="VEuPathDB" id="FungiDB:YDL224C"/>
<dbReference type="eggNOG" id="KOG0118">
    <property type="taxonomic scope" value="Eukaryota"/>
</dbReference>
<dbReference type="GeneTree" id="ENSGT00940000176750"/>
<dbReference type="HOGENOM" id="CLU_018359_0_0_1"/>
<dbReference type="InParanoid" id="Q07655"/>
<dbReference type="OMA" id="THYANIL"/>
<dbReference type="OrthoDB" id="431169at2759"/>
<dbReference type="BioCyc" id="YEAST:G3O-29604-MONOMER"/>
<dbReference type="BioGRID-ORCS" id="851302">
    <property type="hits" value="0 hits in 10 CRISPR screens"/>
</dbReference>
<dbReference type="PRO" id="PR:Q07655"/>
<dbReference type="Proteomes" id="UP000002311">
    <property type="component" value="Chromosome IV"/>
</dbReference>
<dbReference type="RNAct" id="Q07655">
    <property type="molecule type" value="protein"/>
</dbReference>
<dbReference type="GO" id="GO:0005737">
    <property type="term" value="C:cytoplasm"/>
    <property type="evidence" value="ECO:0007005"/>
    <property type="project" value="SGD"/>
</dbReference>
<dbReference type="GO" id="GO:0003729">
    <property type="term" value="F:mRNA binding"/>
    <property type="evidence" value="ECO:0000250"/>
    <property type="project" value="SGD"/>
</dbReference>
<dbReference type="GO" id="GO:0061157">
    <property type="term" value="P:mRNA destabilization"/>
    <property type="evidence" value="ECO:0000316"/>
    <property type="project" value="SGD"/>
</dbReference>
<dbReference type="GO" id="GO:0008361">
    <property type="term" value="P:regulation of cell size"/>
    <property type="evidence" value="ECO:0000316"/>
    <property type="project" value="SGD"/>
</dbReference>
<dbReference type="CDD" id="cd12245">
    <property type="entry name" value="RRM_scw1_like"/>
    <property type="match status" value="1"/>
</dbReference>
<dbReference type="FunFam" id="3.30.70.330:FF:000089">
    <property type="entry name" value="RNA binding protein"/>
    <property type="match status" value="1"/>
</dbReference>
<dbReference type="Gene3D" id="3.30.70.330">
    <property type="match status" value="1"/>
</dbReference>
<dbReference type="InterPro" id="IPR012677">
    <property type="entry name" value="Nucleotide-bd_a/b_plait_sf"/>
</dbReference>
<dbReference type="InterPro" id="IPR035979">
    <property type="entry name" value="RBD_domain_sf"/>
</dbReference>
<dbReference type="InterPro" id="IPR000504">
    <property type="entry name" value="RRM_dom"/>
</dbReference>
<dbReference type="PANTHER" id="PTHR10501">
    <property type="entry name" value="U1 SMALL NUCLEAR RIBONUCLEOPROTEIN A/U2 SMALL NUCLEAR RIBONUCLEOPROTEIN B"/>
    <property type="match status" value="1"/>
</dbReference>
<dbReference type="Pfam" id="PF00076">
    <property type="entry name" value="RRM_1"/>
    <property type="match status" value="1"/>
</dbReference>
<dbReference type="SMART" id="SM00360">
    <property type="entry name" value="RRM"/>
    <property type="match status" value="1"/>
</dbReference>
<dbReference type="SUPFAM" id="SSF54928">
    <property type="entry name" value="RNA-binding domain, RBD"/>
    <property type="match status" value="1"/>
</dbReference>
<dbReference type="PROSITE" id="PS50102">
    <property type="entry name" value="RRM"/>
    <property type="match status" value="1"/>
</dbReference>